<feature type="chain" id="PRO_1000094157" description="Transcription elongation factor GreA">
    <location>
        <begin position="1"/>
        <end position="158"/>
    </location>
</feature>
<feature type="coiled-coil region" evidence="1">
    <location>
        <begin position="8"/>
        <end position="74"/>
    </location>
</feature>
<reference key="1">
    <citation type="submission" date="2008-06" db="EMBL/GenBank/DDBJ databases">
        <title>Complete sequence of Chloroherpeton thalassium ATCC 35110.</title>
        <authorList>
            <consortium name="US DOE Joint Genome Institute"/>
            <person name="Lucas S."/>
            <person name="Copeland A."/>
            <person name="Lapidus A."/>
            <person name="Glavina del Rio T."/>
            <person name="Dalin E."/>
            <person name="Tice H."/>
            <person name="Bruce D."/>
            <person name="Goodwin L."/>
            <person name="Pitluck S."/>
            <person name="Schmutz J."/>
            <person name="Larimer F."/>
            <person name="Land M."/>
            <person name="Hauser L."/>
            <person name="Kyrpides N."/>
            <person name="Mikhailova N."/>
            <person name="Liu Z."/>
            <person name="Li T."/>
            <person name="Zhao F."/>
            <person name="Overmann J."/>
            <person name="Bryant D.A."/>
            <person name="Richardson P."/>
        </authorList>
    </citation>
    <scope>NUCLEOTIDE SEQUENCE [LARGE SCALE GENOMIC DNA]</scope>
    <source>
        <strain>ATCC 35110 / GB-78</strain>
    </source>
</reference>
<evidence type="ECO:0000255" key="1">
    <source>
        <dbReference type="HAMAP-Rule" id="MF_00105"/>
    </source>
</evidence>
<protein>
    <recommendedName>
        <fullName evidence="1">Transcription elongation factor GreA</fullName>
    </recommendedName>
    <alternativeName>
        <fullName evidence="1">Transcript cleavage factor GreA</fullName>
    </alternativeName>
</protein>
<keyword id="KW-0175">Coiled coil</keyword>
<keyword id="KW-0238">DNA-binding</keyword>
<keyword id="KW-1185">Reference proteome</keyword>
<keyword id="KW-0804">Transcription</keyword>
<keyword id="KW-0805">Transcription regulation</keyword>
<proteinExistence type="inferred from homology"/>
<dbReference type="EMBL" id="CP001100">
    <property type="protein sequence ID" value="ACF13010.1"/>
    <property type="molecule type" value="Genomic_DNA"/>
</dbReference>
<dbReference type="RefSeq" id="WP_012499094.1">
    <property type="nucleotide sequence ID" value="NC_011026.1"/>
</dbReference>
<dbReference type="SMR" id="B3QV56"/>
<dbReference type="STRING" id="517418.Ctha_0539"/>
<dbReference type="KEGG" id="cts:Ctha_0539"/>
<dbReference type="eggNOG" id="COG0782">
    <property type="taxonomic scope" value="Bacteria"/>
</dbReference>
<dbReference type="HOGENOM" id="CLU_101379_2_1_10"/>
<dbReference type="OrthoDB" id="9808774at2"/>
<dbReference type="Proteomes" id="UP000001208">
    <property type="component" value="Chromosome"/>
</dbReference>
<dbReference type="GO" id="GO:0003677">
    <property type="term" value="F:DNA binding"/>
    <property type="evidence" value="ECO:0007669"/>
    <property type="project" value="UniProtKB-UniRule"/>
</dbReference>
<dbReference type="GO" id="GO:0070063">
    <property type="term" value="F:RNA polymerase binding"/>
    <property type="evidence" value="ECO:0007669"/>
    <property type="project" value="InterPro"/>
</dbReference>
<dbReference type="GO" id="GO:0006354">
    <property type="term" value="P:DNA-templated transcription elongation"/>
    <property type="evidence" value="ECO:0007669"/>
    <property type="project" value="TreeGrafter"/>
</dbReference>
<dbReference type="GO" id="GO:0032784">
    <property type="term" value="P:regulation of DNA-templated transcription elongation"/>
    <property type="evidence" value="ECO:0007669"/>
    <property type="project" value="UniProtKB-UniRule"/>
</dbReference>
<dbReference type="FunFam" id="1.10.287.180:FF:000001">
    <property type="entry name" value="Transcription elongation factor GreA"/>
    <property type="match status" value="1"/>
</dbReference>
<dbReference type="FunFam" id="3.10.50.30:FF:000001">
    <property type="entry name" value="Transcription elongation factor GreA"/>
    <property type="match status" value="1"/>
</dbReference>
<dbReference type="Gene3D" id="3.10.50.30">
    <property type="entry name" value="Transcription elongation factor, GreA/GreB, C-terminal domain"/>
    <property type="match status" value="1"/>
</dbReference>
<dbReference type="Gene3D" id="1.10.287.180">
    <property type="entry name" value="Transcription elongation factor, GreA/GreB, N-terminal domain"/>
    <property type="match status" value="1"/>
</dbReference>
<dbReference type="HAMAP" id="MF_00105">
    <property type="entry name" value="GreA_GreB"/>
    <property type="match status" value="1"/>
</dbReference>
<dbReference type="InterPro" id="IPR036953">
    <property type="entry name" value="GreA/GreB_C_sf"/>
</dbReference>
<dbReference type="InterPro" id="IPR018151">
    <property type="entry name" value="TF_GreA/GreB_CS"/>
</dbReference>
<dbReference type="InterPro" id="IPR006359">
    <property type="entry name" value="Tscrpt_elong_fac_GreA"/>
</dbReference>
<dbReference type="InterPro" id="IPR028624">
    <property type="entry name" value="Tscrpt_elong_fac_GreA/B"/>
</dbReference>
<dbReference type="InterPro" id="IPR001437">
    <property type="entry name" value="Tscrpt_elong_fac_GreA/B_C"/>
</dbReference>
<dbReference type="InterPro" id="IPR023459">
    <property type="entry name" value="Tscrpt_elong_fac_GreA/B_fam"/>
</dbReference>
<dbReference type="InterPro" id="IPR022691">
    <property type="entry name" value="Tscrpt_elong_fac_GreA/B_N"/>
</dbReference>
<dbReference type="InterPro" id="IPR036805">
    <property type="entry name" value="Tscrpt_elong_fac_GreA/B_N_sf"/>
</dbReference>
<dbReference type="NCBIfam" id="TIGR01462">
    <property type="entry name" value="greA"/>
    <property type="match status" value="1"/>
</dbReference>
<dbReference type="NCBIfam" id="NF001261">
    <property type="entry name" value="PRK00226.1-2"/>
    <property type="match status" value="1"/>
</dbReference>
<dbReference type="NCBIfam" id="NF001263">
    <property type="entry name" value="PRK00226.1-4"/>
    <property type="match status" value="1"/>
</dbReference>
<dbReference type="PANTHER" id="PTHR30437">
    <property type="entry name" value="TRANSCRIPTION ELONGATION FACTOR GREA"/>
    <property type="match status" value="1"/>
</dbReference>
<dbReference type="PANTHER" id="PTHR30437:SF4">
    <property type="entry name" value="TRANSCRIPTION ELONGATION FACTOR GREA"/>
    <property type="match status" value="1"/>
</dbReference>
<dbReference type="Pfam" id="PF01272">
    <property type="entry name" value="GreA_GreB"/>
    <property type="match status" value="1"/>
</dbReference>
<dbReference type="Pfam" id="PF03449">
    <property type="entry name" value="GreA_GreB_N"/>
    <property type="match status" value="1"/>
</dbReference>
<dbReference type="PIRSF" id="PIRSF006092">
    <property type="entry name" value="GreA_GreB"/>
    <property type="match status" value="1"/>
</dbReference>
<dbReference type="SUPFAM" id="SSF54534">
    <property type="entry name" value="FKBP-like"/>
    <property type="match status" value="1"/>
</dbReference>
<dbReference type="SUPFAM" id="SSF46557">
    <property type="entry name" value="GreA transcript cleavage protein, N-terminal domain"/>
    <property type="match status" value="1"/>
</dbReference>
<dbReference type="PROSITE" id="PS00829">
    <property type="entry name" value="GREAB_1"/>
    <property type="match status" value="1"/>
</dbReference>
<dbReference type="PROSITE" id="PS00830">
    <property type="entry name" value="GREAB_2"/>
    <property type="match status" value="1"/>
</dbReference>
<name>GREA_CHLT3</name>
<organism>
    <name type="scientific">Chloroherpeton thalassium (strain ATCC 35110 / GB-78)</name>
    <dbReference type="NCBI Taxonomy" id="517418"/>
    <lineage>
        <taxon>Bacteria</taxon>
        <taxon>Pseudomonadati</taxon>
        <taxon>Chlorobiota</taxon>
        <taxon>Chlorobiia</taxon>
        <taxon>Chlorobiales</taxon>
        <taxon>Chloroherpetonaceae</taxon>
        <taxon>Chloroherpeton</taxon>
    </lineage>
</organism>
<accession>B3QV56</accession>
<gene>
    <name evidence="1" type="primary">greA</name>
    <name type="ordered locus">Ctha_0539</name>
</gene>
<sequence length="158" mass="17763">MSDKTYLTKGGYNKLKDELDDLKTNVRQQVLEKITEAKSHGDLSENAEYEAAKEEQAQVESRISTLERVLSTATILDEKDIKTDKVYILTTVLLKDLDRDEEVEYTLVSSEEADSENGKISVKSPIGKNLLGKSVGEIVEIKVPKGIMRYEVLNIKVK</sequence>
<comment type="function">
    <text evidence="1">Necessary for efficient RNA polymerase transcription elongation past template-encoded arresting sites. The arresting sites in DNA have the property of trapping a certain fraction of elongating RNA polymerases that pass through, resulting in locked ternary complexes. Cleavage of the nascent transcript by cleavage factors such as GreA or GreB allows the resumption of elongation from the new 3'terminus. GreA releases sequences of 2 to 3 nucleotides.</text>
</comment>
<comment type="similarity">
    <text evidence="1">Belongs to the GreA/GreB family.</text>
</comment>